<feature type="chain" id="PRO_0000434843" description="Protein TIFY 6a">
    <location>
        <begin position="1"/>
        <end position="427"/>
    </location>
</feature>
<feature type="domain" description="Tify" evidence="3">
    <location>
        <begin position="196"/>
        <end position="231"/>
    </location>
</feature>
<feature type="region of interest" description="Disordered" evidence="5">
    <location>
        <begin position="1"/>
        <end position="33"/>
    </location>
</feature>
<feature type="region of interest" description="Disordered" evidence="5">
    <location>
        <begin position="293"/>
        <end position="327"/>
    </location>
</feature>
<feature type="region of interest" description="Disordered" evidence="5">
    <location>
        <begin position="360"/>
        <end position="427"/>
    </location>
</feature>
<feature type="short sequence motif" description="Jas" evidence="2">
    <location>
        <begin position="343"/>
        <end position="367"/>
    </location>
</feature>
<feature type="short sequence motif" description="Nuclear localization signal" evidence="4">
    <location>
        <begin position="345"/>
        <end position="352"/>
    </location>
</feature>
<feature type="compositionally biased region" description="Basic and acidic residues" evidence="5">
    <location>
        <begin position="1"/>
        <end position="25"/>
    </location>
</feature>
<feature type="compositionally biased region" description="Polar residues" evidence="5">
    <location>
        <begin position="293"/>
        <end position="303"/>
    </location>
</feature>
<feature type="compositionally biased region" description="Polar residues" evidence="5">
    <location>
        <begin position="317"/>
        <end position="327"/>
    </location>
</feature>
<feature type="compositionally biased region" description="Polar residues" evidence="5">
    <location>
        <begin position="369"/>
        <end position="402"/>
    </location>
</feature>
<feature type="compositionally biased region" description="Polar residues" evidence="5">
    <location>
        <begin position="411"/>
        <end position="427"/>
    </location>
</feature>
<name>TIF6A_ORYSI</name>
<keyword id="KW-1184">Jasmonic acid signaling pathway</keyword>
<keyword id="KW-0539">Nucleus</keyword>
<keyword id="KW-1185">Reference proteome</keyword>
<keyword id="KW-0804">Transcription</keyword>
<keyword id="KW-0805">Transcription regulation</keyword>
<keyword id="KW-0832">Ubl conjugation</keyword>
<sequence>MERDFLGAIGRKEEAAGKPEEHSDYRGGGGGASAAMQWQFPATKVGAASSAFMSFRSSAAAAREEDPKEAAVFDRFSLSGFRPPPRPSPGDAFDGAAAMKQRQFGFNGRQQYAAAAQHGHREQGVDSYGVAAPHHFPSPSPSPRHPVPFGHANPMLRVHSLPNVAGGSPYRNQSFSVGNSVAGSTVGVYGGPRDLQNPKVTQMTIFYDGLVNVFDNIPVEKAQELMLLASRASIPSPPSAARKSDSPISAAAKLTVPEALPARQIVVQKPEASVPLVSGVSNPITIVSQAVTLPKSSSSSNDSAGPKSGGLPLAVTPLSQASPSQPIPVATTNASAIMPRAVPQARKASLARFLEKRKERVSSVAPYPSSKSPLESSDTIGSPSTPSKSSCTDITPSTNNCEDSLCLGQPRNISFSSQEPPSTKLQI</sequence>
<dbReference type="EMBL" id="CM000133">
    <property type="protein sequence ID" value="EAZ07062.1"/>
    <property type="molecule type" value="Genomic_DNA"/>
</dbReference>
<dbReference type="SMR" id="A2YVF1"/>
<dbReference type="STRING" id="39946.A2YVF1"/>
<dbReference type="EnsemblPlants" id="BGIOSGA026952-TA">
    <property type="protein sequence ID" value="BGIOSGA026952-PA"/>
    <property type="gene ID" value="BGIOSGA026952"/>
</dbReference>
<dbReference type="EnsemblPlants" id="OsGoSa_08g0016110.01">
    <property type="protein sequence ID" value="OsGoSa_08g0016110.01"/>
    <property type="gene ID" value="OsGoSa_08g0016110"/>
</dbReference>
<dbReference type="EnsemblPlants" id="OsIR64_08g0016680.01">
    <property type="protein sequence ID" value="OsIR64_08g0016680.01"/>
    <property type="gene ID" value="OsIR64_08g0016680"/>
</dbReference>
<dbReference type="EnsemblPlants" id="OsKYG_08g0016320.01">
    <property type="protein sequence ID" value="OsKYG_08g0016320.01"/>
    <property type="gene ID" value="OsKYG_08g0016320"/>
</dbReference>
<dbReference type="EnsemblPlants" id="OsLaMu_08g0016330.01">
    <property type="protein sequence ID" value="OsLaMu_08g0016330.01"/>
    <property type="gene ID" value="OsLaMu_08g0016330"/>
</dbReference>
<dbReference type="EnsemblPlants" id="OsLima_08g0016040.02">
    <property type="protein sequence ID" value="OsLima_08g0016040.02"/>
    <property type="gene ID" value="OsLima_08g0016040"/>
</dbReference>
<dbReference type="EnsemblPlants" id="OsLiXu_08g0016930.01">
    <property type="protein sequence ID" value="OsLiXu_08g0016930.01"/>
    <property type="gene ID" value="OsLiXu_08g0016930"/>
</dbReference>
<dbReference type="EnsemblPlants" id="OsPr106_08g0016780.01">
    <property type="protein sequence ID" value="OsPr106_08g0016780.01"/>
    <property type="gene ID" value="OsPr106_08g0016780"/>
</dbReference>
<dbReference type="EnsemblPlants" id="OsZS97_08G016760_03">
    <property type="protein sequence ID" value="OsZS97_08G016760_03"/>
    <property type="gene ID" value="OsZS97_08G016760"/>
</dbReference>
<dbReference type="Gramene" id="BGIOSGA026952-TA">
    <property type="protein sequence ID" value="BGIOSGA026952-PA"/>
    <property type="gene ID" value="BGIOSGA026952"/>
</dbReference>
<dbReference type="Gramene" id="OsGoSa_08g0016110.01">
    <property type="protein sequence ID" value="OsGoSa_08g0016110.01"/>
    <property type="gene ID" value="OsGoSa_08g0016110"/>
</dbReference>
<dbReference type="Gramene" id="OsIR64_08g0016680.01">
    <property type="protein sequence ID" value="OsIR64_08g0016680.01"/>
    <property type="gene ID" value="OsIR64_08g0016680"/>
</dbReference>
<dbReference type="Gramene" id="OsKYG_08g0016320.01">
    <property type="protein sequence ID" value="OsKYG_08g0016320.01"/>
    <property type="gene ID" value="OsKYG_08g0016320"/>
</dbReference>
<dbReference type="Gramene" id="OsLaMu_08g0016330.01">
    <property type="protein sequence ID" value="OsLaMu_08g0016330.01"/>
    <property type="gene ID" value="OsLaMu_08g0016330"/>
</dbReference>
<dbReference type="Gramene" id="OsLima_08g0016040.02">
    <property type="protein sequence ID" value="OsLima_08g0016040.02"/>
    <property type="gene ID" value="OsLima_08g0016040"/>
</dbReference>
<dbReference type="Gramene" id="OsLiXu_08g0016930.01">
    <property type="protein sequence ID" value="OsLiXu_08g0016930.01"/>
    <property type="gene ID" value="OsLiXu_08g0016930"/>
</dbReference>
<dbReference type="Gramene" id="OsPr106_08g0016780.01">
    <property type="protein sequence ID" value="OsPr106_08g0016780.01"/>
    <property type="gene ID" value="OsPr106_08g0016780"/>
</dbReference>
<dbReference type="Gramene" id="OsZS97_08G016760_03">
    <property type="protein sequence ID" value="OsZS97_08G016760_03"/>
    <property type="gene ID" value="OsZS97_08G016760"/>
</dbReference>
<dbReference type="HOGENOM" id="CLU_047894_1_0_1"/>
<dbReference type="OMA" id="NPSYKTH"/>
<dbReference type="OrthoDB" id="1939212at2759"/>
<dbReference type="Proteomes" id="UP000007015">
    <property type="component" value="Chromosome 8"/>
</dbReference>
<dbReference type="GO" id="GO:0005634">
    <property type="term" value="C:nucleus"/>
    <property type="evidence" value="ECO:0007669"/>
    <property type="project" value="UniProtKB-SubCell"/>
</dbReference>
<dbReference type="GO" id="GO:0031347">
    <property type="term" value="P:regulation of defense response"/>
    <property type="evidence" value="ECO:0007669"/>
    <property type="project" value="TreeGrafter"/>
</dbReference>
<dbReference type="GO" id="GO:2000022">
    <property type="term" value="P:regulation of jasmonic acid mediated signaling pathway"/>
    <property type="evidence" value="ECO:0007669"/>
    <property type="project" value="TreeGrafter"/>
</dbReference>
<dbReference type="GO" id="GO:0009611">
    <property type="term" value="P:response to wounding"/>
    <property type="evidence" value="ECO:0007669"/>
    <property type="project" value="TreeGrafter"/>
</dbReference>
<dbReference type="InterPro" id="IPR018467">
    <property type="entry name" value="CCT_CS"/>
</dbReference>
<dbReference type="InterPro" id="IPR040390">
    <property type="entry name" value="TIFY/JAZ"/>
</dbReference>
<dbReference type="InterPro" id="IPR010399">
    <property type="entry name" value="Tify_dom"/>
</dbReference>
<dbReference type="PANTHER" id="PTHR33077">
    <property type="entry name" value="PROTEIN TIFY 4A-RELATED-RELATED"/>
    <property type="match status" value="1"/>
</dbReference>
<dbReference type="PANTHER" id="PTHR33077:SF90">
    <property type="entry name" value="PROTEIN TIFY 7"/>
    <property type="match status" value="1"/>
</dbReference>
<dbReference type="Pfam" id="PF09425">
    <property type="entry name" value="Jas_motif"/>
    <property type="match status" value="1"/>
</dbReference>
<dbReference type="Pfam" id="PF06200">
    <property type="entry name" value="tify"/>
    <property type="match status" value="1"/>
</dbReference>
<dbReference type="SMART" id="SM00979">
    <property type="entry name" value="TIFY"/>
    <property type="match status" value="1"/>
</dbReference>
<dbReference type="PROSITE" id="PS51320">
    <property type="entry name" value="TIFY"/>
    <property type="match status" value="1"/>
</dbReference>
<proteinExistence type="inferred from homology"/>
<organism>
    <name type="scientific">Oryza sativa subsp. indica</name>
    <name type="common">Rice</name>
    <dbReference type="NCBI Taxonomy" id="39946"/>
    <lineage>
        <taxon>Eukaryota</taxon>
        <taxon>Viridiplantae</taxon>
        <taxon>Streptophyta</taxon>
        <taxon>Embryophyta</taxon>
        <taxon>Tracheophyta</taxon>
        <taxon>Spermatophyta</taxon>
        <taxon>Magnoliopsida</taxon>
        <taxon>Liliopsida</taxon>
        <taxon>Poales</taxon>
        <taxon>Poaceae</taxon>
        <taxon>BOP clade</taxon>
        <taxon>Oryzoideae</taxon>
        <taxon>Oryzeae</taxon>
        <taxon>Oryzinae</taxon>
        <taxon>Oryza</taxon>
        <taxon>Oryza sativa</taxon>
    </lineage>
</organism>
<protein>
    <recommendedName>
        <fullName evidence="6">Protein TIFY 6a</fullName>
    </recommendedName>
</protein>
<gene>
    <name evidence="6" type="primary">TIFY6A</name>
    <name evidence="6" type="synonym">JAZ3</name>
    <name evidence="7" type="ORF">OsI_29310</name>
</gene>
<reference key="1">
    <citation type="journal article" date="2005" name="PLoS Biol.">
        <title>The genomes of Oryza sativa: a history of duplications.</title>
        <authorList>
            <person name="Yu J."/>
            <person name="Wang J."/>
            <person name="Lin W."/>
            <person name="Li S."/>
            <person name="Li H."/>
            <person name="Zhou J."/>
            <person name="Ni P."/>
            <person name="Dong W."/>
            <person name="Hu S."/>
            <person name="Zeng C."/>
            <person name="Zhang J."/>
            <person name="Zhang Y."/>
            <person name="Li R."/>
            <person name="Xu Z."/>
            <person name="Li S."/>
            <person name="Li X."/>
            <person name="Zheng H."/>
            <person name="Cong L."/>
            <person name="Lin L."/>
            <person name="Yin J."/>
            <person name="Geng J."/>
            <person name="Li G."/>
            <person name="Shi J."/>
            <person name="Liu J."/>
            <person name="Lv H."/>
            <person name="Li J."/>
            <person name="Wang J."/>
            <person name="Deng Y."/>
            <person name="Ran L."/>
            <person name="Shi X."/>
            <person name="Wang X."/>
            <person name="Wu Q."/>
            <person name="Li C."/>
            <person name="Ren X."/>
            <person name="Wang J."/>
            <person name="Wang X."/>
            <person name="Li D."/>
            <person name="Liu D."/>
            <person name="Zhang X."/>
            <person name="Ji Z."/>
            <person name="Zhao W."/>
            <person name="Sun Y."/>
            <person name="Zhang Z."/>
            <person name="Bao J."/>
            <person name="Han Y."/>
            <person name="Dong L."/>
            <person name="Ji J."/>
            <person name="Chen P."/>
            <person name="Wu S."/>
            <person name="Liu J."/>
            <person name="Xiao Y."/>
            <person name="Bu D."/>
            <person name="Tan J."/>
            <person name="Yang L."/>
            <person name="Ye C."/>
            <person name="Zhang J."/>
            <person name="Xu J."/>
            <person name="Zhou Y."/>
            <person name="Yu Y."/>
            <person name="Zhang B."/>
            <person name="Zhuang S."/>
            <person name="Wei H."/>
            <person name="Liu B."/>
            <person name="Lei M."/>
            <person name="Yu H."/>
            <person name="Li Y."/>
            <person name="Xu H."/>
            <person name="Wei S."/>
            <person name="He X."/>
            <person name="Fang L."/>
            <person name="Zhang Z."/>
            <person name="Zhang Y."/>
            <person name="Huang X."/>
            <person name="Su Z."/>
            <person name="Tong W."/>
            <person name="Li J."/>
            <person name="Tong Z."/>
            <person name="Li S."/>
            <person name="Ye J."/>
            <person name="Wang L."/>
            <person name="Fang L."/>
            <person name="Lei T."/>
            <person name="Chen C.-S."/>
            <person name="Chen H.-C."/>
            <person name="Xu Z."/>
            <person name="Li H."/>
            <person name="Huang H."/>
            <person name="Zhang F."/>
            <person name="Xu H."/>
            <person name="Li N."/>
            <person name="Zhao C."/>
            <person name="Li S."/>
            <person name="Dong L."/>
            <person name="Huang Y."/>
            <person name="Li L."/>
            <person name="Xi Y."/>
            <person name="Qi Q."/>
            <person name="Li W."/>
            <person name="Zhang B."/>
            <person name="Hu W."/>
            <person name="Zhang Y."/>
            <person name="Tian X."/>
            <person name="Jiao Y."/>
            <person name="Liang X."/>
            <person name="Jin J."/>
            <person name="Gao L."/>
            <person name="Zheng W."/>
            <person name="Hao B."/>
            <person name="Liu S.-M."/>
            <person name="Wang W."/>
            <person name="Yuan L."/>
            <person name="Cao M."/>
            <person name="McDermott J."/>
            <person name="Samudrala R."/>
            <person name="Wang J."/>
            <person name="Wong G.K.-S."/>
            <person name="Yang H."/>
        </authorList>
    </citation>
    <scope>NUCLEOTIDE SEQUENCE [LARGE SCALE GENOMIC DNA]</scope>
    <source>
        <strain>cv. 93-11</strain>
    </source>
</reference>
<accession>A2YVF1</accession>
<evidence type="ECO:0000250" key="1">
    <source>
        <dbReference type="UniProtKB" id="Q7XPM8"/>
    </source>
</evidence>
<evidence type="ECO:0000255" key="2"/>
<evidence type="ECO:0000255" key="3">
    <source>
        <dbReference type="PROSITE-ProRule" id="PRU00650"/>
    </source>
</evidence>
<evidence type="ECO:0000255" key="4">
    <source>
        <dbReference type="PROSITE-ProRule" id="PRU00768"/>
    </source>
</evidence>
<evidence type="ECO:0000256" key="5">
    <source>
        <dbReference type="SAM" id="MobiDB-lite"/>
    </source>
</evidence>
<evidence type="ECO:0000305" key="6"/>
<evidence type="ECO:0000312" key="7">
    <source>
        <dbReference type="EMBL" id="EAZ07062.1"/>
    </source>
</evidence>
<comment type="function">
    <text evidence="1">Repressor of jasmonate responses.</text>
</comment>
<comment type="subcellular location">
    <subcellularLocation>
        <location evidence="4">Nucleus</location>
    </subcellularLocation>
</comment>
<comment type="domain">
    <text evidence="1">The jas domain (343-367) is required for interaction with COI1.</text>
</comment>
<comment type="PTM">
    <text evidence="1">Ubiquitinated.</text>
</comment>
<comment type="similarity">
    <text evidence="6">Belongs to the TIFY/JAZ family.</text>
</comment>